<dbReference type="EC" id="1.21.4.2"/>
<dbReference type="EMBL" id="M64374">
    <property type="status" value="NOT_ANNOTATED_CDS"/>
    <property type="molecule type" value="Genomic_DNA"/>
</dbReference>
<dbReference type="BioCyc" id="MetaCyc:MONOMER-13144"/>
<dbReference type="GO" id="GO:0030699">
    <property type="term" value="F:glycine reductase activity"/>
    <property type="evidence" value="ECO:0007669"/>
    <property type="project" value="UniProtKB-EC"/>
</dbReference>
<dbReference type="InterPro" id="IPR010187">
    <property type="entry name" value="Various_sel_PB"/>
</dbReference>
<dbReference type="Pfam" id="PF07355">
    <property type="entry name" value="GRDB"/>
    <property type="match status" value="1"/>
</dbReference>
<protein>
    <recommendedName>
        <fullName>Glycine reductase complex component B subunit gamma</fullName>
        <ecNumber>1.21.4.2</ecNumber>
    </recommendedName>
    <alternativeName>
        <fullName>Selenoprotein PB gamma</fullName>
    </alternativeName>
</protein>
<keyword id="KW-0560">Oxidoreductase</keyword>
<keyword id="KW-0712">Selenocysteine</keyword>
<gene>
    <name type="primary">grdB</name>
</gene>
<proteinExistence type="inferred from homology"/>
<accession>P55793</accession>
<sequence>MIRVVHYIKEFFANIGGEEMAHVAPEVREGVVGPG</sequence>
<organism>
    <name type="scientific">Gottschalkia purinilytica</name>
    <name type="common">Clostridium purinilyticum</name>
    <dbReference type="NCBI Taxonomy" id="1503"/>
    <lineage>
        <taxon>Bacteria</taxon>
        <taxon>Bacillati</taxon>
        <taxon>Bacillota</taxon>
        <taxon>Tissierellia</taxon>
        <taxon>Tissierellales</taxon>
        <taxon>Gottschalkiaceae</taxon>
        <taxon>Gottschalkia</taxon>
    </lineage>
</organism>
<evidence type="ECO:0000305" key="1"/>
<feature type="chain" id="PRO_0000087599" description="Glycine reductase complex component B subunit gamma">
    <location>
        <begin position="1"/>
        <end position="35" status="greater than"/>
    </location>
</feature>
<feature type="non-terminal residue">
    <location>
        <position position="35"/>
    </location>
</feature>
<comment type="function">
    <text>In the first step of glycine reductase, the substrate is bound to component PB via a Schiff base intermediate. Then the PB-activated substrate is nucleophilically attacked by the selenol anion of component PA to transform it to a carboxymethylated selenoether and the respective amine. By action of component PC, acetyl phosphate is formed, leaving component PA in its oxidized state. Finally component PA becomes reduced by the thioredoxin system to start a new catalytic cycle of reductive deamination.</text>
</comment>
<comment type="catalytic activity">
    <reaction>
        <text>acetyl phosphate + [thioredoxin]-disulfide + NH4(+) + H2O = [thioredoxin]-dithiol + glycine + phosphate + H(+)</text>
        <dbReference type="Rhea" id="RHEA:12232"/>
        <dbReference type="Rhea" id="RHEA-COMP:10698"/>
        <dbReference type="Rhea" id="RHEA-COMP:10700"/>
        <dbReference type="ChEBI" id="CHEBI:15377"/>
        <dbReference type="ChEBI" id="CHEBI:15378"/>
        <dbReference type="ChEBI" id="CHEBI:22191"/>
        <dbReference type="ChEBI" id="CHEBI:28938"/>
        <dbReference type="ChEBI" id="CHEBI:29950"/>
        <dbReference type="ChEBI" id="CHEBI:43474"/>
        <dbReference type="ChEBI" id="CHEBI:50058"/>
        <dbReference type="ChEBI" id="CHEBI:57305"/>
        <dbReference type="EC" id="1.21.4.2"/>
    </reaction>
</comment>
<comment type="subunit">
    <text>Heterohexamer of two alpha, two beta and two gamma subunits. Component of the glycine reductase complex, together with components A and C. PB is substrate specific.</text>
</comment>
<comment type="similarity">
    <text evidence="1">Belongs to the GrdB/GrdF/GrdH family.</text>
</comment>
<reference key="1">
    <citation type="journal article" date="1991" name="J. Bacteriol.">
        <title>Selenoprotein A component of the glycine reductase complex from Clostridium purinolyticum: nucleotide sequence of the gene shows that selenocysteine is encoded by UGA.</title>
        <authorList>
            <person name="Garcia G.E."/>
            <person name="Stadtman T.C."/>
        </authorList>
    </citation>
    <scope>NUCLEOTIDE SEQUENCE [GENOMIC DNA]</scope>
    <source>
        <strain>ATCC 33906 / DSM 1384 / WA1</strain>
    </source>
</reference>
<name>GRDB_GOTPU</name>